<sequence>MSGHSKWHNIQGRKNAQDAKRGKIFQKISRDLYQAAKAGDPDPANNAQLRLVIDKAHAANMPKKNIDRAIAKASGIGGAKFEEVTYEGYGPGGVAVMVSALTDNKNRTASAVRSAFSHSGGSLGASGSVSYMFDRKGLIEILRDDLDKSEDDMLMDALDAGAEDMKATEEKFQIFTDPSSMTDVRDALQEQGYELDTAEVTMIPQNRTEVPADKAKQYRHLIDELTENDDVADIYETGILPDEDDDEE</sequence>
<gene>
    <name type="ordered locus">LAR_0538</name>
</gene>
<proteinExistence type="inferred from homology"/>
<protein>
    <recommendedName>
        <fullName evidence="1">Probable transcriptional regulatory protein LAR_0538</fullName>
    </recommendedName>
</protein>
<name>Y538_LIMRJ</name>
<accession>B2G6H2</accession>
<keyword id="KW-0963">Cytoplasm</keyword>
<keyword id="KW-0238">DNA-binding</keyword>
<keyword id="KW-0804">Transcription</keyword>
<keyword id="KW-0805">Transcription regulation</keyword>
<evidence type="ECO:0000255" key="1">
    <source>
        <dbReference type="HAMAP-Rule" id="MF_00693"/>
    </source>
</evidence>
<evidence type="ECO:0000256" key="2">
    <source>
        <dbReference type="SAM" id="MobiDB-lite"/>
    </source>
</evidence>
<feature type="chain" id="PRO_1000132208" description="Probable transcriptional regulatory protein LAR_0538">
    <location>
        <begin position="1"/>
        <end position="248"/>
    </location>
</feature>
<feature type="region of interest" description="Disordered" evidence="2">
    <location>
        <begin position="1"/>
        <end position="22"/>
    </location>
</feature>
<organism>
    <name type="scientific">Limosilactobacillus reuteri subsp. reuteri (strain JCM 1112)</name>
    <name type="common">Lactobacillus reuteri</name>
    <dbReference type="NCBI Taxonomy" id="557433"/>
    <lineage>
        <taxon>Bacteria</taxon>
        <taxon>Bacillati</taxon>
        <taxon>Bacillota</taxon>
        <taxon>Bacilli</taxon>
        <taxon>Lactobacillales</taxon>
        <taxon>Lactobacillaceae</taxon>
        <taxon>Limosilactobacillus</taxon>
    </lineage>
</organism>
<dbReference type="EMBL" id="AP007281">
    <property type="protein sequence ID" value="BAG25054.1"/>
    <property type="molecule type" value="Genomic_DNA"/>
</dbReference>
<dbReference type="RefSeq" id="WP_003667655.1">
    <property type="nucleotide sequence ID" value="NC_010609.1"/>
</dbReference>
<dbReference type="SMR" id="B2G6H2"/>
<dbReference type="KEGG" id="lrf:LAR_0538"/>
<dbReference type="HOGENOM" id="CLU_062974_3_0_9"/>
<dbReference type="GO" id="GO:0005829">
    <property type="term" value="C:cytosol"/>
    <property type="evidence" value="ECO:0007669"/>
    <property type="project" value="TreeGrafter"/>
</dbReference>
<dbReference type="GO" id="GO:0003677">
    <property type="term" value="F:DNA binding"/>
    <property type="evidence" value="ECO:0007669"/>
    <property type="project" value="UniProtKB-UniRule"/>
</dbReference>
<dbReference type="GO" id="GO:0006355">
    <property type="term" value="P:regulation of DNA-templated transcription"/>
    <property type="evidence" value="ECO:0007669"/>
    <property type="project" value="UniProtKB-UniRule"/>
</dbReference>
<dbReference type="FunFam" id="1.10.10.200:FF:000002">
    <property type="entry name" value="Probable transcriptional regulatory protein CLM62_37755"/>
    <property type="match status" value="1"/>
</dbReference>
<dbReference type="FunFam" id="3.30.70.980:FF:000002">
    <property type="entry name" value="Probable transcriptional regulatory protein YebC"/>
    <property type="match status" value="1"/>
</dbReference>
<dbReference type="Gene3D" id="1.10.10.200">
    <property type="match status" value="1"/>
</dbReference>
<dbReference type="Gene3D" id="3.30.70.980">
    <property type="match status" value="2"/>
</dbReference>
<dbReference type="HAMAP" id="MF_00693">
    <property type="entry name" value="Transcrip_reg_TACO1"/>
    <property type="match status" value="1"/>
</dbReference>
<dbReference type="InterPro" id="IPR017856">
    <property type="entry name" value="Integrase-like_N"/>
</dbReference>
<dbReference type="InterPro" id="IPR048300">
    <property type="entry name" value="TACO1_YebC-like_2nd/3rd_dom"/>
</dbReference>
<dbReference type="InterPro" id="IPR049083">
    <property type="entry name" value="TACO1_YebC_N"/>
</dbReference>
<dbReference type="InterPro" id="IPR002876">
    <property type="entry name" value="Transcrip_reg_TACO1-like"/>
</dbReference>
<dbReference type="InterPro" id="IPR026564">
    <property type="entry name" value="Transcrip_reg_TACO1-like_dom3"/>
</dbReference>
<dbReference type="InterPro" id="IPR029072">
    <property type="entry name" value="YebC-like"/>
</dbReference>
<dbReference type="NCBIfam" id="NF001030">
    <property type="entry name" value="PRK00110.1"/>
    <property type="match status" value="1"/>
</dbReference>
<dbReference type="NCBIfam" id="NF009044">
    <property type="entry name" value="PRK12378.1"/>
    <property type="match status" value="1"/>
</dbReference>
<dbReference type="NCBIfam" id="TIGR01033">
    <property type="entry name" value="YebC/PmpR family DNA-binding transcriptional regulator"/>
    <property type="match status" value="1"/>
</dbReference>
<dbReference type="PANTHER" id="PTHR12532:SF6">
    <property type="entry name" value="TRANSCRIPTIONAL REGULATORY PROTEIN YEBC-RELATED"/>
    <property type="match status" value="1"/>
</dbReference>
<dbReference type="PANTHER" id="PTHR12532">
    <property type="entry name" value="TRANSLATIONAL ACTIVATOR OF CYTOCHROME C OXIDASE 1"/>
    <property type="match status" value="1"/>
</dbReference>
<dbReference type="Pfam" id="PF20772">
    <property type="entry name" value="TACO1_YebC_N"/>
    <property type="match status" value="1"/>
</dbReference>
<dbReference type="Pfam" id="PF01709">
    <property type="entry name" value="Transcrip_reg"/>
    <property type="match status" value="1"/>
</dbReference>
<dbReference type="SUPFAM" id="SSF75625">
    <property type="entry name" value="YebC-like"/>
    <property type="match status" value="1"/>
</dbReference>
<reference key="1">
    <citation type="journal article" date="2008" name="DNA Res.">
        <title>Comparative genome analysis of Lactobacillus reuteri and Lactobacillus fermentum reveal a genomic island for reuterin and cobalamin production.</title>
        <authorList>
            <person name="Morita H."/>
            <person name="Toh H."/>
            <person name="Fukuda S."/>
            <person name="Horikawa H."/>
            <person name="Oshima K."/>
            <person name="Suzuki T."/>
            <person name="Murakami M."/>
            <person name="Hisamatsu S."/>
            <person name="Kato Y."/>
            <person name="Takizawa T."/>
            <person name="Fukuoka H."/>
            <person name="Yoshimura T."/>
            <person name="Itoh K."/>
            <person name="O'Sullivan D.J."/>
            <person name="McKay L.L."/>
            <person name="Ohno H."/>
            <person name="Kikuchi J."/>
            <person name="Masaoka T."/>
            <person name="Hattori M."/>
        </authorList>
    </citation>
    <scope>NUCLEOTIDE SEQUENCE [LARGE SCALE GENOMIC DNA]</scope>
    <source>
        <strain>JCM 1112</strain>
    </source>
</reference>
<comment type="subcellular location">
    <subcellularLocation>
        <location evidence="1">Cytoplasm</location>
    </subcellularLocation>
</comment>
<comment type="similarity">
    <text evidence="1">Belongs to the TACO1 family.</text>
</comment>